<feature type="chain" id="PRO_0000102335" description="Lipoyl synthase">
    <location>
        <begin position="1"/>
        <end position="282"/>
    </location>
</feature>
<feature type="domain" description="Radical SAM core" evidence="2">
    <location>
        <begin position="49"/>
        <end position="264"/>
    </location>
</feature>
<feature type="binding site" evidence="1">
    <location>
        <position position="37"/>
    </location>
    <ligand>
        <name>[4Fe-4S] cluster</name>
        <dbReference type="ChEBI" id="CHEBI:49883"/>
        <label>1</label>
    </ligand>
</feature>
<feature type="binding site" evidence="1">
    <location>
        <position position="42"/>
    </location>
    <ligand>
        <name>[4Fe-4S] cluster</name>
        <dbReference type="ChEBI" id="CHEBI:49883"/>
        <label>1</label>
    </ligand>
</feature>
<feature type="binding site" evidence="1">
    <location>
        <position position="48"/>
    </location>
    <ligand>
        <name>[4Fe-4S] cluster</name>
        <dbReference type="ChEBI" id="CHEBI:49883"/>
        <label>1</label>
    </ligand>
</feature>
<feature type="binding site" evidence="1">
    <location>
        <position position="63"/>
    </location>
    <ligand>
        <name>[4Fe-4S] cluster</name>
        <dbReference type="ChEBI" id="CHEBI:49883"/>
        <label>2</label>
        <note>4Fe-4S-S-AdoMet</note>
    </ligand>
</feature>
<feature type="binding site" evidence="1">
    <location>
        <position position="67"/>
    </location>
    <ligand>
        <name>[4Fe-4S] cluster</name>
        <dbReference type="ChEBI" id="CHEBI:49883"/>
        <label>2</label>
        <note>4Fe-4S-S-AdoMet</note>
    </ligand>
</feature>
<feature type="binding site" evidence="1">
    <location>
        <position position="70"/>
    </location>
    <ligand>
        <name>[4Fe-4S] cluster</name>
        <dbReference type="ChEBI" id="CHEBI:49883"/>
        <label>2</label>
        <note>4Fe-4S-S-AdoMet</note>
    </ligand>
</feature>
<feature type="binding site" evidence="1">
    <location>
        <position position="275"/>
    </location>
    <ligand>
        <name>[4Fe-4S] cluster</name>
        <dbReference type="ChEBI" id="CHEBI:49883"/>
        <label>1</label>
    </ligand>
</feature>
<accession>Q7MWT4</accession>
<protein>
    <recommendedName>
        <fullName evidence="1">Lipoyl synthase</fullName>
        <ecNumber evidence="1">2.8.1.8</ecNumber>
    </recommendedName>
    <alternativeName>
        <fullName evidence="1">Lip-syn</fullName>
        <shortName evidence="1">LS</shortName>
    </alternativeName>
    <alternativeName>
        <fullName evidence="1">Lipoate synthase</fullName>
    </alternativeName>
    <alternativeName>
        <fullName evidence="1">Lipoic acid synthase</fullName>
    </alternativeName>
    <alternativeName>
        <fullName evidence="1">Sulfur insertion protein LipA</fullName>
    </alternativeName>
</protein>
<name>LIPA_PORGI</name>
<keyword id="KW-0004">4Fe-4S</keyword>
<keyword id="KW-0963">Cytoplasm</keyword>
<keyword id="KW-0408">Iron</keyword>
<keyword id="KW-0411">Iron-sulfur</keyword>
<keyword id="KW-0479">Metal-binding</keyword>
<keyword id="KW-1185">Reference proteome</keyword>
<keyword id="KW-0949">S-adenosyl-L-methionine</keyword>
<keyword id="KW-0808">Transferase</keyword>
<proteinExistence type="inferred from homology"/>
<comment type="function">
    <text evidence="1">Catalyzes the radical-mediated insertion of two sulfur atoms into the C-6 and C-8 positions of the octanoyl moiety bound to the lipoyl domains of lipoate-dependent enzymes, thereby converting the octanoylated domains into lipoylated derivatives.</text>
</comment>
<comment type="catalytic activity">
    <reaction evidence="1">
        <text>[[Fe-S] cluster scaffold protein carrying a second [4Fe-4S](2+) cluster] + N(6)-octanoyl-L-lysyl-[protein] + 2 oxidized [2Fe-2S]-[ferredoxin] + 2 S-adenosyl-L-methionine + 4 H(+) = [[Fe-S] cluster scaffold protein] + N(6)-[(R)-dihydrolipoyl]-L-lysyl-[protein] + 4 Fe(3+) + 2 hydrogen sulfide + 2 5'-deoxyadenosine + 2 L-methionine + 2 reduced [2Fe-2S]-[ferredoxin]</text>
        <dbReference type="Rhea" id="RHEA:16585"/>
        <dbReference type="Rhea" id="RHEA-COMP:9928"/>
        <dbReference type="Rhea" id="RHEA-COMP:10000"/>
        <dbReference type="Rhea" id="RHEA-COMP:10001"/>
        <dbReference type="Rhea" id="RHEA-COMP:10475"/>
        <dbReference type="Rhea" id="RHEA-COMP:14568"/>
        <dbReference type="Rhea" id="RHEA-COMP:14569"/>
        <dbReference type="ChEBI" id="CHEBI:15378"/>
        <dbReference type="ChEBI" id="CHEBI:17319"/>
        <dbReference type="ChEBI" id="CHEBI:29034"/>
        <dbReference type="ChEBI" id="CHEBI:29919"/>
        <dbReference type="ChEBI" id="CHEBI:33722"/>
        <dbReference type="ChEBI" id="CHEBI:33737"/>
        <dbReference type="ChEBI" id="CHEBI:33738"/>
        <dbReference type="ChEBI" id="CHEBI:57844"/>
        <dbReference type="ChEBI" id="CHEBI:59789"/>
        <dbReference type="ChEBI" id="CHEBI:78809"/>
        <dbReference type="ChEBI" id="CHEBI:83100"/>
        <dbReference type="EC" id="2.8.1.8"/>
    </reaction>
</comment>
<comment type="cofactor">
    <cofactor evidence="1">
        <name>[4Fe-4S] cluster</name>
        <dbReference type="ChEBI" id="CHEBI:49883"/>
    </cofactor>
    <text evidence="1">Binds 2 [4Fe-4S] clusters per subunit. One cluster is coordinated with 3 cysteines and an exchangeable S-adenosyl-L-methionine.</text>
</comment>
<comment type="pathway">
    <text evidence="1">Protein modification; protein lipoylation via endogenous pathway; protein N(6)-(lipoyl)lysine from octanoyl-[acyl-carrier-protein]: step 2/2.</text>
</comment>
<comment type="subcellular location">
    <subcellularLocation>
        <location evidence="1">Cytoplasm</location>
    </subcellularLocation>
</comment>
<comment type="similarity">
    <text evidence="1">Belongs to the radical SAM superfamily. Lipoyl synthase family.</text>
</comment>
<organism>
    <name type="scientific">Porphyromonas gingivalis (strain ATCC BAA-308 / W83)</name>
    <dbReference type="NCBI Taxonomy" id="242619"/>
    <lineage>
        <taxon>Bacteria</taxon>
        <taxon>Pseudomonadati</taxon>
        <taxon>Bacteroidota</taxon>
        <taxon>Bacteroidia</taxon>
        <taxon>Bacteroidales</taxon>
        <taxon>Porphyromonadaceae</taxon>
        <taxon>Porphyromonas</taxon>
    </lineage>
</organism>
<sequence length="282" mass="31269">MAQHVKKPEWLKIRLGGNEKFTETKSIVEGHCLHTICTSGKCPNMGECWSRGTATFMIGGDICTRACRFCNTLTGRPKPLNEAEPTHVALSIKLMGLNHAVVTSVDRDDLPDYGAAHWVKTIQEIRRINSGVTLEVLIPDFKGRMDLVDMIIEASPDVISHNLETVRRLTPSVRSVATYDTSLAVLRHIAQSGKMPAKTGMMLGLGETEEEILELMDDALAAGVSVITIGQYLQPSRKNLPVVEYITPEQFEHLRLVGIEKGFRTIESAPLVRSSYHAERHL</sequence>
<gene>
    <name evidence="1" type="primary">lipA</name>
    <name type="ordered locus">PG_0504</name>
</gene>
<evidence type="ECO:0000255" key="1">
    <source>
        <dbReference type="HAMAP-Rule" id="MF_00206"/>
    </source>
</evidence>
<evidence type="ECO:0000255" key="2">
    <source>
        <dbReference type="PROSITE-ProRule" id="PRU01266"/>
    </source>
</evidence>
<dbReference type="EC" id="2.8.1.8" evidence="1"/>
<dbReference type="EMBL" id="AE015924">
    <property type="protein sequence ID" value="AAQ65698.1"/>
    <property type="molecule type" value="Genomic_DNA"/>
</dbReference>
<dbReference type="RefSeq" id="WP_010956048.1">
    <property type="nucleotide sequence ID" value="NC_002950.2"/>
</dbReference>
<dbReference type="SMR" id="Q7MWT4"/>
<dbReference type="STRING" id="242619.PG_0504"/>
<dbReference type="EnsemblBacteria" id="AAQ65698">
    <property type="protein sequence ID" value="AAQ65698"/>
    <property type="gene ID" value="PG_0504"/>
</dbReference>
<dbReference type="KEGG" id="pgi:PG_0504"/>
<dbReference type="PATRIC" id="fig|242619.8.peg.463"/>
<dbReference type="eggNOG" id="COG0320">
    <property type="taxonomic scope" value="Bacteria"/>
</dbReference>
<dbReference type="HOGENOM" id="CLU_033144_2_1_10"/>
<dbReference type="BioCyc" id="PGIN242619:G1G02-465-MONOMER"/>
<dbReference type="UniPathway" id="UPA00538">
    <property type="reaction ID" value="UER00593"/>
</dbReference>
<dbReference type="Proteomes" id="UP000000588">
    <property type="component" value="Chromosome"/>
</dbReference>
<dbReference type="GO" id="GO:0005737">
    <property type="term" value="C:cytoplasm"/>
    <property type="evidence" value="ECO:0007669"/>
    <property type="project" value="UniProtKB-SubCell"/>
</dbReference>
<dbReference type="GO" id="GO:0051539">
    <property type="term" value="F:4 iron, 4 sulfur cluster binding"/>
    <property type="evidence" value="ECO:0007669"/>
    <property type="project" value="UniProtKB-UniRule"/>
</dbReference>
<dbReference type="GO" id="GO:0016992">
    <property type="term" value="F:lipoate synthase activity"/>
    <property type="evidence" value="ECO:0007669"/>
    <property type="project" value="UniProtKB-UniRule"/>
</dbReference>
<dbReference type="GO" id="GO:0046872">
    <property type="term" value="F:metal ion binding"/>
    <property type="evidence" value="ECO:0007669"/>
    <property type="project" value="UniProtKB-KW"/>
</dbReference>
<dbReference type="CDD" id="cd01335">
    <property type="entry name" value="Radical_SAM"/>
    <property type="match status" value="1"/>
</dbReference>
<dbReference type="FunFam" id="3.20.20.70:FF:000040">
    <property type="entry name" value="Lipoyl synthase"/>
    <property type="match status" value="1"/>
</dbReference>
<dbReference type="Gene3D" id="3.20.20.70">
    <property type="entry name" value="Aldolase class I"/>
    <property type="match status" value="1"/>
</dbReference>
<dbReference type="HAMAP" id="MF_00206">
    <property type="entry name" value="Lipoyl_synth"/>
    <property type="match status" value="1"/>
</dbReference>
<dbReference type="InterPro" id="IPR013785">
    <property type="entry name" value="Aldolase_TIM"/>
</dbReference>
<dbReference type="InterPro" id="IPR006638">
    <property type="entry name" value="Elp3/MiaA/NifB-like_rSAM"/>
</dbReference>
<dbReference type="InterPro" id="IPR003698">
    <property type="entry name" value="Lipoyl_synth"/>
</dbReference>
<dbReference type="InterPro" id="IPR007197">
    <property type="entry name" value="rSAM"/>
</dbReference>
<dbReference type="NCBIfam" id="TIGR00510">
    <property type="entry name" value="lipA"/>
    <property type="match status" value="1"/>
</dbReference>
<dbReference type="NCBIfam" id="NF004019">
    <property type="entry name" value="PRK05481.1"/>
    <property type="match status" value="1"/>
</dbReference>
<dbReference type="NCBIfam" id="NF009544">
    <property type="entry name" value="PRK12928.1"/>
    <property type="match status" value="1"/>
</dbReference>
<dbReference type="PANTHER" id="PTHR10949">
    <property type="entry name" value="LIPOYL SYNTHASE"/>
    <property type="match status" value="1"/>
</dbReference>
<dbReference type="PANTHER" id="PTHR10949:SF0">
    <property type="entry name" value="LIPOYL SYNTHASE, MITOCHONDRIAL"/>
    <property type="match status" value="1"/>
</dbReference>
<dbReference type="Pfam" id="PF04055">
    <property type="entry name" value="Radical_SAM"/>
    <property type="match status" value="1"/>
</dbReference>
<dbReference type="PIRSF" id="PIRSF005963">
    <property type="entry name" value="Lipoyl_synth"/>
    <property type="match status" value="1"/>
</dbReference>
<dbReference type="SFLD" id="SFLDF00271">
    <property type="entry name" value="lipoyl_synthase"/>
    <property type="match status" value="1"/>
</dbReference>
<dbReference type="SFLD" id="SFLDG01058">
    <property type="entry name" value="lipoyl_synthase_like"/>
    <property type="match status" value="1"/>
</dbReference>
<dbReference type="SMART" id="SM00729">
    <property type="entry name" value="Elp3"/>
    <property type="match status" value="1"/>
</dbReference>
<dbReference type="SUPFAM" id="SSF102114">
    <property type="entry name" value="Radical SAM enzymes"/>
    <property type="match status" value="1"/>
</dbReference>
<dbReference type="PROSITE" id="PS51918">
    <property type="entry name" value="RADICAL_SAM"/>
    <property type="match status" value="1"/>
</dbReference>
<reference key="1">
    <citation type="journal article" date="2003" name="J. Bacteriol.">
        <title>Complete genome sequence of the oral pathogenic bacterium Porphyromonas gingivalis strain W83.</title>
        <authorList>
            <person name="Nelson K.E."/>
            <person name="Fleischmann R.D."/>
            <person name="DeBoy R.T."/>
            <person name="Paulsen I.T."/>
            <person name="Fouts D.E."/>
            <person name="Eisen J.A."/>
            <person name="Daugherty S.C."/>
            <person name="Dodson R.J."/>
            <person name="Durkin A.S."/>
            <person name="Gwinn M.L."/>
            <person name="Haft D.H."/>
            <person name="Kolonay J.F."/>
            <person name="Nelson W.C."/>
            <person name="Mason T.M."/>
            <person name="Tallon L."/>
            <person name="Gray J."/>
            <person name="Granger D."/>
            <person name="Tettelin H."/>
            <person name="Dong H."/>
            <person name="Galvin J.L."/>
            <person name="Duncan M.J."/>
            <person name="Dewhirst F.E."/>
            <person name="Fraser C.M."/>
        </authorList>
    </citation>
    <scope>NUCLEOTIDE SEQUENCE [LARGE SCALE GENOMIC DNA]</scope>
    <source>
        <strain>ATCC BAA-308 / W83</strain>
    </source>
</reference>